<accession>Q0KEM6</accession>
<protein>
    <recommendedName>
        <fullName evidence="1">Adenine phosphoribosyltransferase</fullName>
        <shortName evidence="1">APRT</shortName>
        <ecNumber evidence="1">2.4.2.7</ecNumber>
    </recommendedName>
</protein>
<feature type="chain" id="PRO_0000321388" description="Adenine phosphoribosyltransferase">
    <location>
        <begin position="1"/>
        <end position="190"/>
    </location>
</feature>
<evidence type="ECO:0000255" key="1">
    <source>
        <dbReference type="HAMAP-Rule" id="MF_00004"/>
    </source>
</evidence>
<organism>
    <name type="scientific">Cupriavidus necator (strain ATCC 17699 / DSM 428 / KCTC 22496 / NCIMB 10442 / H16 / Stanier 337)</name>
    <name type="common">Ralstonia eutropha</name>
    <dbReference type="NCBI Taxonomy" id="381666"/>
    <lineage>
        <taxon>Bacteria</taxon>
        <taxon>Pseudomonadati</taxon>
        <taxon>Pseudomonadota</taxon>
        <taxon>Betaproteobacteria</taxon>
        <taxon>Burkholderiales</taxon>
        <taxon>Burkholderiaceae</taxon>
        <taxon>Cupriavidus</taxon>
    </lineage>
</organism>
<keyword id="KW-0963">Cytoplasm</keyword>
<keyword id="KW-0328">Glycosyltransferase</keyword>
<keyword id="KW-0660">Purine salvage</keyword>
<keyword id="KW-1185">Reference proteome</keyword>
<keyword id="KW-0808">Transferase</keyword>
<comment type="function">
    <text evidence="1">Catalyzes a salvage reaction resulting in the formation of AMP, that is energically less costly than de novo synthesis.</text>
</comment>
<comment type="catalytic activity">
    <reaction evidence="1">
        <text>AMP + diphosphate = 5-phospho-alpha-D-ribose 1-diphosphate + adenine</text>
        <dbReference type="Rhea" id="RHEA:16609"/>
        <dbReference type="ChEBI" id="CHEBI:16708"/>
        <dbReference type="ChEBI" id="CHEBI:33019"/>
        <dbReference type="ChEBI" id="CHEBI:58017"/>
        <dbReference type="ChEBI" id="CHEBI:456215"/>
        <dbReference type="EC" id="2.4.2.7"/>
    </reaction>
</comment>
<comment type="pathway">
    <text evidence="1">Purine metabolism; AMP biosynthesis via salvage pathway; AMP from adenine: step 1/1.</text>
</comment>
<comment type="subunit">
    <text evidence="1">Homodimer.</text>
</comment>
<comment type="subcellular location">
    <subcellularLocation>
        <location evidence="1">Cytoplasm</location>
    </subcellularLocation>
</comment>
<comment type="similarity">
    <text evidence="1">Belongs to the purine/pyrimidine phosphoribosyltransferase family.</text>
</comment>
<name>APT_CUPNH</name>
<sequence>MADSIIQSPELGDVTGYLRERIRTVPDWPMPGVMFRDITPLLQNPKTLRVLIDVFVHRYMDAQLDLVAGIDARGFILGAIVAYELNLGFVPIRKKGKLPFQTVAEEYELEYGSATVEIHADACKSGDRVLLVDDLIATGGTMMAGLKLLERLGATVVEGAAIVDLPELGGSKLLQDGGLPLFTVCKFEGH</sequence>
<reference key="1">
    <citation type="journal article" date="2006" name="Nat. Biotechnol.">
        <title>Genome sequence of the bioplastic-producing 'Knallgas' bacterium Ralstonia eutropha H16.</title>
        <authorList>
            <person name="Pohlmann A."/>
            <person name="Fricke W.F."/>
            <person name="Reinecke F."/>
            <person name="Kusian B."/>
            <person name="Liesegang H."/>
            <person name="Cramm R."/>
            <person name="Eitinger T."/>
            <person name="Ewering C."/>
            <person name="Poetter M."/>
            <person name="Schwartz E."/>
            <person name="Strittmatter A."/>
            <person name="Voss I."/>
            <person name="Gottschalk G."/>
            <person name="Steinbuechel A."/>
            <person name="Friedrich B."/>
            <person name="Bowien B."/>
        </authorList>
    </citation>
    <scope>NUCLEOTIDE SEQUENCE [LARGE SCALE GENOMIC DNA]</scope>
    <source>
        <strain>ATCC 17699 / DSM 428 / KCTC 22496 / NCIMB 10442 / H16 / Stanier 337</strain>
    </source>
</reference>
<gene>
    <name evidence="1" type="primary">apt</name>
    <name type="ordered locus">H16_A0395</name>
</gene>
<dbReference type="EC" id="2.4.2.7" evidence="1"/>
<dbReference type="EMBL" id="AM260479">
    <property type="protein sequence ID" value="CAJ91545.1"/>
    <property type="molecule type" value="Genomic_DNA"/>
</dbReference>
<dbReference type="RefSeq" id="WP_011614490.1">
    <property type="nucleotide sequence ID" value="NC_008313.1"/>
</dbReference>
<dbReference type="SMR" id="Q0KEM6"/>
<dbReference type="STRING" id="381666.H16_A0395"/>
<dbReference type="KEGG" id="reh:H16_A0395"/>
<dbReference type="PATRIC" id="fig|381666.6.peg.758"/>
<dbReference type="eggNOG" id="COG0503">
    <property type="taxonomic scope" value="Bacteria"/>
</dbReference>
<dbReference type="HOGENOM" id="CLU_063339_3_0_4"/>
<dbReference type="OrthoDB" id="9803963at2"/>
<dbReference type="UniPathway" id="UPA00588">
    <property type="reaction ID" value="UER00646"/>
</dbReference>
<dbReference type="Proteomes" id="UP000008210">
    <property type="component" value="Chromosome 1"/>
</dbReference>
<dbReference type="GO" id="GO:0005737">
    <property type="term" value="C:cytoplasm"/>
    <property type="evidence" value="ECO:0007669"/>
    <property type="project" value="UniProtKB-SubCell"/>
</dbReference>
<dbReference type="GO" id="GO:0003999">
    <property type="term" value="F:adenine phosphoribosyltransferase activity"/>
    <property type="evidence" value="ECO:0007669"/>
    <property type="project" value="UniProtKB-UniRule"/>
</dbReference>
<dbReference type="GO" id="GO:0006168">
    <property type="term" value="P:adenine salvage"/>
    <property type="evidence" value="ECO:0007669"/>
    <property type="project" value="InterPro"/>
</dbReference>
<dbReference type="GO" id="GO:0044209">
    <property type="term" value="P:AMP salvage"/>
    <property type="evidence" value="ECO:0007669"/>
    <property type="project" value="UniProtKB-UniRule"/>
</dbReference>
<dbReference type="GO" id="GO:0006166">
    <property type="term" value="P:purine ribonucleoside salvage"/>
    <property type="evidence" value="ECO:0007669"/>
    <property type="project" value="UniProtKB-KW"/>
</dbReference>
<dbReference type="CDD" id="cd06223">
    <property type="entry name" value="PRTases_typeI"/>
    <property type="match status" value="1"/>
</dbReference>
<dbReference type="FunFam" id="3.40.50.2020:FF:000021">
    <property type="entry name" value="Adenine phosphoribosyltransferase"/>
    <property type="match status" value="1"/>
</dbReference>
<dbReference type="Gene3D" id="3.40.50.2020">
    <property type="match status" value="1"/>
</dbReference>
<dbReference type="HAMAP" id="MF_00004">
    <property type="entry name" value="Aden_phosphoribosyltr"/>
    <property type="match status" value="1"/>
</dbReference>
<dbReference type="InterPro" id="IPR005764">
    <property type="entry name" value="Ade_phspho_trans"/>
</dbReference>
<dbReference type="InterPro" id="IPR050120">
    <property type="entry name" value="Adenine_PRTase"/>
</dbReference>
<dbReference type="InterPro" id="IPR000836">
    <property type="entry name" value="PRibTrfase_dom"/>
</dbReference>
<dbReference type="InterPro" id="IPR029057">
    <property type="entry name" value="PRTase-like"/>
</dbReference>
<dbReference type="NCBIfam" id="TIGR01090">
    <property type="entry name" value="apt"/>
    <property type="match status" value="1"/>
</dbReference>
<dbReference type="NCBIfam" id="NF002634">
    <property type="entry name" value="PRK02304.1-3"/>
    <property type="match status" value="1"/>
</dbReference>
<dbReference type="NCBIfam" id="NF002636">
    <property type="entry name" value="PRK02304.1-5"/>
    <property type="match status" value="1"/>
</dbReference>
<dbReference type="PANTHER" id="PTHR11776">
    <property type="entry name" value="ADENINE PHOSPHORIBOSYLTRANSFERASE"/>
    <property type="match status" value="1"/>
</dbReference>
<dbReference type="PANTHER" id="PTHR11776:SF7">
    <property type="entry name" value="PHOSPHORIBOSYLTRANSFERASE DOMAIN-CONTAINING PROTEIN"/>
    <property type="match status" value="1"/>
</dbReference>
<dbReference type="Pfam" id="PF00156">
    <property type="entry name" value="Pribosyltran"/>
    <property type="match status" value="1"/>
</dbReference>
<dbReference type="SUPFAM" id="SSF53271">
    <property type="entry name" value="PRTase-like"/>
    <property type="match status" value="1"/>
</dbReference>
<dbReference type="PROSITE" id="PS00103">
    <property type="entry name" value="PUR_PYR_PR_TRANSFER"/>
    <property type="match status" value="1"/>
</dbReference>
<proteinExistence type="inferred from homology"/>